<name>K1B9D_ANEVI</name>
<sequence length="79" mass="8860">NLKVLAVFVLCAILVVVTAERRGTETGGYKKDTLEDLKKRTHDCFDSFKEATCHMAKTNRLCKTSAKYQINCKKTCGLC</sequence>
<organism>
    <name type="scientific">Anemonia viridis</name>
    <name type="common">Snakelocks anemone</name>
    <dbReference type="NCBI Taxonomy" id="51769"/>
    <lineage>
        <taxon>Eukaryota</taxon>
        <taxon>Metazoa</taxon>
        <taxon>Cnidaria</taxon>
        <taxon>Anthozoa</taxon>
        <taxon>Hexacorallia</taxon>
        <taxon>Actiniaria</taxon>
        <taxon>Actiniidae</taxon>
        <taxon>Anemonia</taxon>
    </lineage>
</organism>
<reference key="1">
    <citation type="journal article" date="2009" name="BMC Genomics">
        <title>Comprehensive EST analysis of the symbiotic sea anemone, Anemonia viridis.</title>
        <authorList>
            <person name="Sabourault C."/>
            <person name="Ganot P."/>
            <person name="Deleury E."/>
            <person name="Allemand D."/>
            <person name="Furla P."/>
        </authorList>
    </citation>
    <scope>NUCLEOTIDE SEQUENCE [MRNA]</scope>
</reference>
<reference key="2">
    <citation type="journal article" date="2011" name="BMC Genomics">
        <title>The mining of toxin-like polypeptides from EST database by single residue distribution analysis.</title>
        <authorList>
            <person name="Kozlov S."/>
            <person name="Grishin E."/>
        </authorList>
    </citation>
    <scope>NOMENCLATURE</scope>
</reference>
<reference key="3">
    <citation type="journal article" date="2012" name="Toxicon">
        <title>Development of a rational nomenclature for naming peptide and protein toxins from sea anemones.</title>
        <authorList>
            <person name="Oliveira J.S."/>
            <person name="Fuentes-Silva D."/>
            <person name="King G.F."/>
        </authorList>
    </citation>
    <scope>NOMENCLATURE</scope>
</reference>
<proteinExistence type="evidence at transcript level"/>
<protein>
    <recommendedName>
        <fullName evidence="5">U-actitoxin-Avd9d</fullName>
        <shortName evidence="5">U-AITX-Avd9d</shortName>
    </recommendedName>
    <alternativeName>
        <fullName evidence="4">Potassium channel toxin avtx-8</fullName>
    </alternativeName>
</protein>
<feature type="signal peptide" evidence="2">
    <location>
        <begin position="1" status="less than"/>
        <end position="19"/>
    </location>
</feature>
<feature type="propeptide" id="PRO_0000433745" evidence="7">
    <location>
        <begin position="20"/>
        <end position="37"/>
    </location>
</feature>
<feature type="chain" id="PRO_0000433746" description="U-actitoxin-Avd9d">
    <location>
        <begin position="41"/>
        <end position="79"/>
    </location>
</feature>
<feature type="domain" description="ShKT" evidence="3">
    <location>
        <begin position="44"/>
        <end position="79"/>
    </location>
</feature>
<feature type="region of interest" description="Crucial for binding to potassium channels" evidence="1">
    <location>
        <begin position="67"/>
        <end position="68"/>
    </location>
</feature>
<feature type="disulfide bond" evidence="3">
    <location>
        <begin position="44"/>
        <end position="79"/>
    </location>
</feature>
<feature type="disulfide bond" evidence="3">
    <location>
        <begin position="53"/>
        <end position="72"/>
    </location>
</feature>
<feature type="disulfide bond" evidence="3">
    <location>
        <begin position="62"/>
        <end position="76"/>
    </location>
</feature>
<feature type="sequence conflict" description="In Ref. 1; FK728190." evidence="6" ref="1">
    <original>ET</original>
    <variation>DL</variation>
    <location>
        <begin position="25"/>
        <end position="26"/>
    </location>
</feature>
<feature type="sequence conflict" description="In Ref. 1; FK728190/FK747613." evidence="6" ref="1">
    <original>E</original>
    <variation>Q</variation>
    <location>
        <position position="35"/>
    </location>
</feature>
<feature type="non-terminal residue" evidence="4">
    <location>
        <position position="1"/>
    </location>
</feature>
<dbReference type="EMBL" id="FK747792">
    <property type="status" value="NOT_ANNOTATED_CDS"/>
    <property type="molecule type" value="mRNA"/>
</dbReference>
<dbReference type="EMBL" id="FK728190">
    <property type="status" value="NOT_ANNOTATED_CDS"/>
    <property type="molecule type" value="mRNA"/>
</dbReference>
<dbReference type="EMBL" id="FK747613">
    <property type="status" value="NOT_ANNOTATED_CDS"/>
    <property type="molecule type" value="mRNA"/>
</dbReference>
<dbReference type="SMR" id="P0DN03"/>
<dbReference type="GO" id="GO:0005576">
    <property type="term" value="C:extracellular region"/>
    <property type="evidence" value="ECO:0007669"/>
    <property type="project" value="UniProtKB-SubCell"/>
</dbReference>
<dbReference type="GO" id="GO:0042151">
    <property type="term" value="C:nematocyst"/>
    <property type="evidence" value="ECO:0007669"/>
    <property type="project" value="UniProtKB-SubCell"/>
</dbReference>
<dbReference type="GO" id="GO:0015459">
    <property type="term" value="F:potassium channel regulator activity"/>
    <property type="evidence" value="ECO:0007669"/>
    <property type="project" value="UniProtKB-KW"/>
</dbReference>
<dbReference type="GO" id="GO:0090729">
    <property type="term" value="F:toxin activity"/>
    <property type="evidence" value="ECO:0007669"/>
    <property type="project" value="UniProtKB-KW"/>
</dbReference>
<dbReference type="InterPro" id="IPR003582">
    <property type="entry name" value="ShKT_dom"/>
</dbReference>
<dbReference type="SUPFAM" id="SSF57546">
    <property type="entry name" value="Crisp domain-like"/>
    <property type="match status" value="1"/>
</dbReference>
<dbReference type="PROSITE" id="PS51670">
    <property type="entry name" value="SHKT"/>
    <property type="match status" value="1"/>
</dbReference>
<evidence type="ECO:0000250" key="1">
    <source>
        <dbReference type="UniProtKB" id="P29186"/>
    </source>
</evidence>
<evidence type="ECO:0000255" key="2"/>
<evidence type="ECO:0000255" key="3">
    <source>
        <dbReference type="PROSITE-ProRule" id="PRU01005"/>
    </source>
</evidence>
<evidence type="ECO:0000303" key="4">
    <source>
    </source>
</evidence>
<evidence type="ECO:0000303" key="5">
    <source>
    </source>
</evidence>
<evidence type="ECO:0000305" key="6"/>
<evidence type="ECO:0000305" key="7">
    <source>
    </source>
</evidence>
<keyword id="KW-1015">Disulfide bond</keyword>
<keyword id="KW-0872">Ion channel impairing toxin</keyword>
<keyword id="KW-0166">Nematocyst</keyword>
<keyword id="KW-0528">Neurotoxin</keyword>
<keyword id="KW-0632">Potassium channel impairing toxin</keyword>
<keyword id="KW-0964">Secreted</keyword>
<keyword id="KW-0732">Signal</keyword>
<keyword id="KW-0800">Toxin</keyword>
<keyword id="KW-1220">Voltage-gated potassium channel impairing toxin</keyword>
<accession>P0DN03</accession>
<comment type="function">
    <text evidence="1">Inhibits voltage-gated potassium channels (Kv1/KCNA).</text>
</comment>
<comment type="subcellular location">
    <subcellularLocation>
        <location evidence="6">Secreted</location>
    </subcellularLocation>
    <subcellularLocation>
        <location evidence="6">Nematocyst</location>
    </subcellularLocation>
</comment>
<comment type="similarity">
    <text>Belongs to the sea anemone type 1 potassium channel toxin family. Type 1b subfamily.</text>
</comment>
<comment type="caution">
    <text evidence="6">Opinions are divided on whether Anemonia viridis (Forsskal, 1775) and Anemonia sulcata (Pennant, 1777) are separate species.</text>
</comment>